<organism>
    <name type="scientific">Acinetobacter baumannii (strain AB0057)</name>
    <dbReference type="NCBI Taxonomy" id="480119"/>
    <lineage>
        <taxon>Bacteria</taxon>
        <taxon>Pseudomonadati</taxon>
        <taxon>Pseudomonadota</taxon>
        <taxon>Gammaproteobacteria</taxon>
        <taxon>Moraxellales</taxon>
        <taxon>Moraxellaceae</taxon>
        <taxon>Acinetobacter</taxon>
        <taxon>Acinetobacter calcoaceticus/baumannii complex</taxon>
    </lineage>
</organism>
<comment type="function">
    <text evidence="1">Involved in transcription antitermination. Required for transcription of ribosomal RNA (rRNA) genes. Binds specifically to the boxA antiterminator sequence of the ribosomal RNA (rrn) operons.</text>
</comment>
<comment type="similarity">
    <text evidence="1">Belongs to the NusB family.</text>
</comment>
<gene>
    <name evidence="1" type="primary">nusB</name>
    <name type="ordered locus">AB57_3840</name>
</gene>
<name>NUSB_ACIB5</name>
<dbReference type="EMBL" id="CP001182">
    <property type="protein sequence ID" value="ACJ43192.1"/>
    <property type="molecule type" value="Genomic_DNA"/>
</dbReference>
<dbReference type="RefSeq" id="WP_000084188.1">
    <property type="nucleotide sequence ID" value="NC_011586.2"/>
</dbReference>
<dbReference type="SMR" id="B7I252"/>
<dbReference type="GeneID" id="92895632"/>
<dbReference type="KEGG" id="abn:AB57_3840"/>
<dbReference type="HOGENOM" id="CLU_087843_4_1_6"/>
<dbReference type="Proteomes" id="UP000007094">
    <property type="component" value="Chromosome"/>
</dbReference>
<dbReference type="GO" id="GO:0005829">
    <property type="term" value="C:cytosol"/>
    <property type="evidence" value="ECO:0007669"/>
    <property type="project" value="TreeGrafter"/>
</dbReference>
<dbReference type="GO" id="GO:0003723">
    <property type="term" value="F:RNA binding"/>
    <property type="evidence" value="ECO:0007669"/>
    <property type="project" value="UniProtKB-UniRule"/>
</dbReference>
<dbReference type="GO" id="GO:0006353">
    <property type="term" value="P:DNA-templated transcription termination"/>
    <property type="evidence" value="ECO:0007669"/>
    <property type="project" value="UniProtKB-UniRule"/>
</dbReference>
<dbReference type="GO" id="GO:0031564">
    <property type="term" value="P:transcription antitermination"/>
    <property type="evidence" value="ECO:0007669"/>
    <property type="project" value="UniProtKB-KW"/>
</dbReference>
<dbReference type="Gene3D" id="1.10.940.10">
    <property type="entry name" value="NusB-like"/>
    <property type="match status" value="1"/>
</dbReference>
<dbReference type="HAMAP" id="MF_00073">
    <property type="entry name" value="NusB"/>
    <property type="match status" value="1"/>
</dbReference>
<dbReference type="InterPro" id="IPR035926">
    <property type="entry name" value="NusB-like_sf"/>
</dbReference>
<dbReference type="InterPro" id="IPR011605">
    <property type="entry name" value="NusB_fam"/>
</dbReference>
<dbReference type="InterPro" id="IPR006027">
    <property type="entry name" value="NusB_RsmB_TIM44"/>
</dbReference>
<dbReference type="NCBIfam" id="TIGR01951">
    <property type="entry name" value="nusB"/>
    <property type="match status" value="1"/>
</dbReference>
<dbReference type="PANTHER" id="PTHR11078:SF3">
    <property type="entry name" value="ANTITERMINATION NUSB DOMAIN-CONTAINING PROTEIN"/>
    <property type="match status" value="1"/>
</dbReference>
<dbReference type="PANTHER" id="PTHR11078">
    <property type="entry name" value="N UTILIZATION SUBSTANCE PROTEIN B-RELATED"/>
    <property type="match status" value="1"/>
</dbReference>
<dbReference type="Pfam" id="PF01029">
    <property type="entry name" value="NusB"/>
    <property type="match status" value="1"/>
</dbReference>
<dbReference type="SUPFAM" id="SSF48013">
    <property type="entry name" value="NusB-like"/>
    <property type="match status" value="1"/>
</dbReference>
<proteinExistence type="inferred from homology"/>
<sequence length="149" mass="17017">MSQTLQAAYAAKRKARRFAVQGIYEWQMSHNPVHEIEARTRAENAMHKVDLNYYHELLTQVIAQHEDLDALLIPVLDREIDALDGVELATLRLGAYELRDHLEIPYRVVLDEAIELAKHFGGADSHKYINGVLDRLSSTLRSAEKQQAK</sequence>
<keyword id="KW-0694">RNA-binding</keyword>
<keyword id="KW-0804">Transcription</keyword>
<keyword id="KW-0889">Transcription antitermination</keyword>
<keyword id="KW-0805">Transcription regulation</keyword>
<evidence type="ECO:0000255" key="1">
    <source>
        <dbReference type="HAMAP-Rule" id="MF_00073"/>
    </source>
</evidence>
<protein>
    <recommendedName>
        <fullName evidence="1">Transcription antitermination protein NusB</fullName>
    </recommendedName>
    <alternativeName>
        <fullName evidence="1">Antitermination factor NusB</fullName>
    </alternativeName>
</protein>
<accession>B7I252</accession>
<feature type="chain" id="PRO_1000117041" description="Transcription antitermination protein NusB">
    <location>
        <begin position="1"/>
        <end position="149"/>
    </location>
</feature>
<reference key="1">
    <citation type="journal article" date="2008" name="J. Bacteriol.">
        <title>Comparative genome sequence analysis of multidrug-resistant Acinetobacter baumannii.</title>
        <authorList>
            <person name="Adams M.D."/>
            <person name="Goglin K."/>
            <person name="Molyneaux N."/>
            <person name="Hujer K.M."/>
            <person name="Lavender H."/>
            <person name="Jamison J.J."/>
            <person name="MacDonald I.J."/>
            <person name="Martin K.M."/>
            <person name="Russo T."/>
            <person name="Campagnari A.A."/>
            <person name="Hujer A.M."/>
            <person name="Bonomo R.A."/>
            <person name="Gill S.R."/>
        </authorList>
    </citation>
    <scope>NUCLEOTIDE SEQUENCE [LARGE SCALE GENOMIC DNA]</scope>
    <source>
        <strain>AB0057</strain>
    </source>
</reference>